<sequence length="272" mass="32241">MPKITKIEVQKKNKERFNLFLDEQFEMGIDIDTLVKFNLKKGQQLEAADMAEIQKYDHYRIGLNKAIQYLSYKKRTEKEVIQYLQKEEISEQAISEVIEYCYREKLIDHQDYAESLKNTMIRTTDKGPKIYQQKLYQLGIEPNIIEIFTELYREQQELDDIIQIAEKISKTKKGPQNKVKEKVMQSLIQKGFEMETIHAVLNEMDFTQDEAVLDDLLQRDLEKIYNKNRKKYTQQKLISKTIEGLMRKGYKYDKIKAKLEESGIADGTEEIE</sequence>
<accession>A6QI55</accession>
<keyword id="KW-0963">Cytoplasm</keyword>
<dbReference type="EMBL" id="AP009351">
    <property type="protein sequence ID" value="BAF68037.1"/>
    <property type="molecule type" value="Genomic_DNA"/>
</dbReference>
<dbReference type="RefSeq" id="WP_001124419.1">
    <property type="nucleotide sequence ID" value="NZ_JBBIAE010000020.1"/>
</dbReference>
<dbReference type="SMR" id="A6QI55"/>
<dbReference type="KEGG" id="sae:NWMN_1765"/>
<dbReference type="HOGENOM" id="CLU_066607_4_0_9"/>
<dbReference type="Proteomes" id="UP000006386">
    <property type="component" value="Chromosome"/>
</dbReference>
<dbReference type="GO" id="GO:0005737">
    <property type="term" value="C:cytoplasm"/>
    <property type="evidence" value="ECO:0007669"/>
    <property type="project" value="UniProtKB-SubCell"/>
</dbReference>
<dbReference type="GO" id="GO:0006282">
    <property type="term" value="P:regulation of DNA repair"/>
    <property type="evidence" value="ECO:0007669"/>
    <property type="project" value="UniProtKB-UniRule"/>
</dbReference>
<dbReference type="Gene3D" id="1.10.10.10">
    <property type="entry name" value="Winged helix-like DNA-binding domain superfamily/Winged helix DNA-binding domain"/>
    <property type="match status" value="4"/>
</dbReference>
<dbReference type="HAMAP" id="MF_01114">
    <property type="entry name" value="RecX"/>
    <property type="match status" value="1"/>
</dbReference>
<dbReference type="InterPro" id="IPR053926">
    <property type="entry name" value="RecX_HTH_1st"/>
</dbReference>
<dbReference type="InterPro" id="IPR053925">
    <property type="entry name" value="RecX_HTH_3rd"/>
</dbReference>
<dbReference type="InterPro" id="IPR003783">
    <property type="entry name" value="Regulatory_RecX"/>
</dbReference>
<dbReference type="InterPro" id="IPR036388">
    <property type="entry name" value="WH-like_DNA-bd_sf"/>
</dbReference>
<dbReference type="NCBIfam" id="NF010733">
    <property type="entry name" value="PRK14135.1"/>
    <property type="match status" value="1"/>
</dbReference>
<dbReference type="PANTHER" id="PTHR33602">
    <property type="entry name" value="REGULATORY PROTEIN RECX FAMILY PROTEIN"/>
    <property type="match status" value="1"/>
</dbReference>
<dbReference type="PANTHER" id="PTHR33602:SF1">
    <property type="entry name" value="REGULATORY PROTEIN RECX FAMILY PROTEIN"/>
    <property type="match status" value="1"/>
</dbReference>
<dbReference type="Pfam" id="PF21982">
    <property type="entry name" value="RecX_HTH1"/>
    <property type="match status" value="1"/>
</dbReference>
<dbReference type="Pfam" id="PF21981">
    <property type="entry name" value="RecX_HTH3"/>
    <property type="match status" value="1"/>
</dbReference>
<protein>
    <recommendedName>
        <fullName evidence="1">Regulatory protein RecX</fullName>
    </recommendedName>
</protein>
<name>RECX_STAAE</name>
<evidence type="ECO:0000255" key="1">
    <source>
        <dbReference type="HAMAP-Rule" id="MF_01114"/>
    </source>
</evidence>
<feature type="chain" id="PRO_1000073034" description="Regulatory protein RecX">
    <location>
        <begin position="1"/>
        <end position="272"/>
    </location>
</feature>
<reference key="1">
    <citation type="journal article" date="2008" name="J. Bacteriol.">
        <title>Genome sequence of Staphylococcus aureus strain Newman and comparative analysis of staphylococcal genomes: polymorphism and evolution of two major pathogenicity islands.</title>
        <authorList>
            <person name="Baba T."/>
            <person name="Bae T."/>
            <person name="Schneewind O."/>
            <person name="Takeuchi F."/>
            <person name="Hiramatsu K."/>
        </authorList>
    </citation>
    <scope>NUCLEOTIDE SEQUENCE [LARGE SCALE GENOMIC DNA]</scope>
    <source>
        <strain>Newman</strain>
    </source>
</reference>
<gene>
    <name evidence="1" type="primary">recX</name>
    <name type="ordered locus">NWMN_1765</name>
</gene>
<organism>
    <name type="scientific">Staphylococcus aureus (strain Newman)</name>
    <dbReference type="NCBI Taxonomy" id="426430"/>
    <lineage>
        <taxon>Bacteria</taxon>
        <taxon>Bacillati</taxon>
        <taxon>Bacillota</taxon>
        <taxon>Bacilli</taxon>
        <taxon>Bacillales</taxon>
        <taxon>Staphylococcaceae</taxon>
        <taxon>Staphylococcus</taxon>
    </lineage>
</organism>
<comment type="function">
    <text evidence="1">Modulates RecA activity.</text>
</comment>
<comment type="subcellular location">
    <subcellularLocation>
        <location evidence="1">Cytoplasm</location>
    </subcellularLocation>
</comment>
<comment type="similarity">
    <text evidence="1">Belongs to the RecX family.</text>
</comment>
<proteinExistence type="inferred from homology"/>